<proteinExistence type="inferred from homology"/>
<geneLocation type="chloroplast"/>
<comment type="function">
    <text evidence="1">Component of the cytochrome b6-f complex, which mediates electron transfer between photosystem II (PSII) and photosystem I (PSI), cyclic electron flow around PSI, and state transitions. PetL is important for photoautotrophic growth as well as for electron transfer efficiency and stability of the cytochrome b6-f complex.</text>
</comment>
<comment type="subunit">
    <text evidence="1">The 4 large subunits of the cytochrome b6-f complex are cytochrome b6, subunit IV (17 kDa polypeptide, PetD), cytochrome f and the Rieske protein, while the 4 small subunits are PetG, PetL, PetM and PetN. The complex functions as a dimer.</text>
</comment>
<comment type="subcellular location">
    <subcellularLocation>
        <location evidence="1">Plastid</location>
        <location evidence="1">Chloroplast thylakoid membrane</location>
        <topology evidence="1">Single-pass membrane protein</topology>
    </subcellularLocation>
</comment>
<comment type="similarity">
    <text evidence="1">Belongs to the PetL family.</text>
</comment>
<sequence>MSLIIGYIILLACAFGLAAGLYFGLSAIKLI</sequence>
<gene>
    <name evidence="1" type="primary">petL</name>
</gene>
<organism>
    <name type="scientific">Guillardia theta</name>
    <name type="common">Cryptophyte</name>
    <name type="synonym">Cryptomonas phi</name>
    <dbReference type="NCBI Taxonomy" id="55529"/>
    <lineage>
        <taxon>Eukaryota</taxon>
        <taxon>Cryptophyceae</taxon>
        <taxon>Pyrenomonadales</taxon>
        <taxon>Geminigeraceae</taxon>
        <taxon>Guillardia</taxon>
    </lineage>
</organism>
<dbReference type="EMBL" id="AF041468">
    <property type="protein sequence ID" value="AAC35659.1"/>
    <property type="molecule type" value="Genomic_DNA"/>
</dbReference>
<dbReference type="RefSeq" id="NP_050725.1">
    <property type="nucleotide sequence ID" value="NC_000926.1"/>
</dbReference>
<dbReference type="SMR" id="O78468"/>
<dbReference type="GeneID" id="857029"/>
<dbReference type="HOGENOM" id="CLU_220907_2_1_1"/>
<dbReference type="GO" id="GO:0009535">
    <property type="term" value="C:chloroplast thylakoid membrane"/>
    <property type="evidence" value="ECO:0007669"/>
    <property type="project" value="UniProtKB-SubCell"/>
</dbReference>
<dbReference type="GO" id="GO:0009512">
    <property type="term" value="C:cytochrome b6f complex"/>
    <property type="evidence" value="ECO:0007669"/>
    <property type="project" value="InterPro"/>
</dbReference>
<dbReference type="GO" id="GO:0045158">
    <property type="term" value="F:electron transporter, transferring electrons within cytochrome b6/f complex of photosystem II activity"/>
    <property type="evidence" value="ECO:0007669"/>
    <property type="project" value="UniProtKB-UniRule"/>
</dbReference>
<dbReference type="GO" id="GO:0015979">
    <property type="term" value="P:photosynthesis"/>
    <property type="evidence" value="ECO:0007669"/>
    <property type="project" value="UniProtKB-KW"/>
</dbReference>
<dbReference type="HAMAP" id="MF_00433">
    <property type="entry name" value="Cytb6_f_PetL"/>
    <property type="match status" value="1"/>
</dbReference>
<dbReference type="InterPro" id="IPR007802">
    <property type="entry name" value="Cyt_b6/f_cplx_su6"/>
</dbReference>
<dbReference type="Pfam" id="PF05115">
    <property type="entry name" value="PetL"/>
    <property type="match status" value="1"/>
</dbReference>
<accession>O78468</accession>
<name>PETL_GUITH</name>
<feature type="chain" id="PRO_0000220450" description="Cytochrome b6-f complex subunit 6">
    <location>
        <begin position="1"/>
        <end position="31"/>
    </location>
</feature>
<feature type="transmembrane region" description="Helical" evidence="1">
    <location>
        <begin position="3"/>
        <end position="23"/>
    </location>
</feature>
<protein>
    <recommendedName>
        <fullName evidence="1">Cytochrome b6-f complex subunit 6</fullName>
    </recommendedName>
    <alternativeName>
        <fullName evidence="1">Cytochrome b6-f complex subunit PetL</fullName>
    </alternativeName>
    <alternativeName>
        <fullName evidence="1">Cytochrome b6-f complex subunit VI</fullName>
    </alternativeName>
</protein>
<keyword id="KW-0150">Chloroplast</keyword>
<keyword id="KW-0249">Electron transport</keyword>
<keyword id="KW-0472">Membrane</keyword>
<keyword id="KW-0602">Photosynthesis</keyword>
<keyword id="KW-0934">Plastid</keyword>
<keyword id="KW-0793">Thylakoid</keyword>
<keyword id="KW-0812">Transmembrane</keyword>
<keyword id="KW-1133">Transmembrane helix</keyword>
<keyword id="KW-0813">Transport</keyword>
<reference key="1">
    <citation type="journal article" date="1999" name="J. Mol. Evol.">
        <title>The plastid genome of the cryptophyte alga, Guillardia theta: complete sequence and conserved synteny groups confirm its common ancestry with red algae.</title>
        <authorList>
            <person name="Douglas S.E."/>
            <person name="Penny S.L."/>
        </authorList>
    </citation>
    <scope>NUCLEOTIDE SEQUENCE [LARGE SCALE GENOMIC DNA]</scope>
</reference>
<evidence type="ECO:0000255" key="1">
    <source>
        <dbReference type="HAMAP-Rule" id="MF_00433"/>
    </source>
</evidence>